<organism>
    <name type="scientific">Histophilus somni (strain 2336)</name>
    <name type="common">Haemophilus somnus</name>
    <dbReference type="NCBI Taxonomy" id="228400"/>
    <lineage>
        <taxon>Bacteria</taxon>
        <taxon>Pseudomonadati</taxon>
        <taxon>Pseudomonadota</taxon>
        <taxon>Gammaproteobacteria</taxon>
        <taxon>Pasteurellales</taxon>
        <taxon>Pasteurellaceae</taxon>
        <taxon>Histophilus</taxon>
    </lineage>
</organism>
<protein>
    <recommendedName>
        <fullName evidence="1">Dihydroxy-acid dehydratase</fullName>
        <shortName evidence="1">DAD</shortName>
        <ecNumber evidence="1">4.2.1.9</ecNumber>
    </recommendedName>
</protein>
<proteinExistence type="inferred from homology"/>
<gene>
    <name evidence="1" type="primary">ilvD</name>
    <name type="ordered locus">HSM_0213</name>
</gene>
<sequence>MPKLRSATSTQGRNMAGARALWRATGMKENDFGKPIIAVVNSFTQFVPGHVHLKDMGQLVAAEIEKFGGVAKEFNTIAVDDGIAMGHGGMLYSLPSRDLIADSVEYMVNAHCADAMVCISNCDKITPGMLMAALRLNIPTVFVSGGPMEAGKTKLSDQIIKLDLVDAMIQGANPNVSDDVSEQIERSACPTCGSCSGMFTANSMNCLTEALGLSLPGNGSCLATHADRKQLFLAAGKQIVELCKRYYEQDDTSVLPRSIATKEAFDNAMSLDIAMGGSTNTVLHLLAAAQEAEVNFTMADIDRLSRVVPCLSKVAPNTQKYHMEDVHRAGGIMAILGELDRAGLLNSQTRTILGMSIGEQIAKYDIKLTQDKAIHKFFRAGPAGIRTTQAFSQDCRWDTVDDDRENGCIRSKEFAYSQDGGLAMLSGNIALDGCIVKTAGVDESILKFSGKAIVFESQEDAVSGILGGKVQAGHVVVIRYEGPKGGPGMQEMLYPTSYLKSMGLGKACALLTDGRFSGGTSGLSIGHCSPEAAAGGLIGVVKDGDIIEIDIPNRRIELMVSEEELAERRAEQDKLGWKPANRQREVSFALKVYGYFATSADKGAVRDKTKI</sequence>
<feature type="chain" id="PRO_1000073979" description="Dihydroxy-acid dehydratase">
    <location>
        <begin position="1"/>
        <end position="611"/>
    </location>
</feature>
<feature type="active site" description="Proton acceptor" evidence="1">
    <location>
        <position position="517"/>
    </location>
</feature>
<feature type="binding site" evidence="1">
    <location>
        <position position="81"/>
    </location>
    <ligand>
        <name>Mg(2+)</name>
        <dbReference type="ChEBI" id="CHEBI:18420"/>
    </ligand>
</feature>
<feature type="binding site" evidence="1">
    <location>
        <position position="122"/>
    </location>
    <ligand>
        <name>[2Fe-2S] cluster</name>
        <dbReference type="ChEBI" id="CHEBI:190135"/>
    </ligand>
</feature>
<feature type="binding site" evidence="1">
    <location>
        <position position="123"/>
    </location>
    <ligand>
        <name>Mg(2+)</name>
        <dbReference type="ChEBI" id="CHEBI:18420"/>
    </ligand>
</feature>
<feature type="binding site" description="via carbamate group" evidence="1">
    <location>
        <position position="124"/>
    </location>
    <ligand>
        <name>Mg(2+)</name>
        <dbReference type="ChEBI" id="CHEBI:18420"/>
    </ligand>
</feature>
<feature type="binding site" evidence="1">
    <location>
        <position position="195"/>
    </location>
    <ligand>
        <name>[2Fe-2S] cluster</name>
        <dbReference type="ChEBI" id="CHEBI:190135"/>
    </ligand>
</feature>
<feature type="binding site" evidence="1">
    <location>
        <position position="491"/>
    </location>
    <ligand>
        <name>Mg(2+)</name>
        <dbReference type="ChEBI" id="CHEBI:18420"/>
    </ligand>
</feature>
<feature type="modified residue" description="N6-carboxylysine" evidence="1">
    <location>
        <position position="124"/>
    </location>
</feature>
<comment type="function">
    <text evidence="1">Functions in the biosynthesis of branched-chain amino acids. Catalyzes the dehydration of (2R,3R)-2,3-dihydroxy-3-methylpentanoate (2,3-dihydroxy-3-methylvalerate) into 2-oxo-3-methylpentanoate (2-oxo-3-methylvalerate) and of (2R)-2,3-dihydroxy-3-methylbutanoate (2,3-dihydroxyisovalerate) into 2-oxo-3-methylbutanoate (2-oxoisovalerate), the penultimate precursor to L-isoleucine and L-valine, respectively.</text>
</comment>
<comment type="catalytic activity">
    <reaction evidence="1">
        <text>(2R)-2,3-dihydroxy-3-methylbutanoate = 3-methyl-2-oxobutanoate + H2O</text>
        <dbReference type="Rhea" id="RHEA:24809"/>
        <dbReference type="ChEBI" id="CHEBI:11851"/>
        <dbReference type="ChEBI" id="CHEBI:15377"/>
        <dbReference type="ChEBI" id="CHEBI:49072"/>
        <dbReference type="EC" id="4.2.1.9"/>
    </reaction>
    <physiologicalReaction direction="left-to-right" evidence="1">
        <dbReference type="Rhea" id="RHEA:24810"/>
    </physiologicalReaction>
</comment>
<comment type="catalytic activity">
    <reaction evidence="1">
        <text>(2R,3R)-2,3-dihydroxy-3-methylpentanoate = (S)-3-methyl-2-oxopentanoate + H2O</text>
        <dbReference type="Rhea" id="RHEA:27694"/>
        <dbReference type="ChEBI" id="CHEBI:15377"/>
        <dbReference type="ChEBI" id="CHEBI:35146"/>
        <dbReference type="ChEBI" id="CHEBI:49258"/>
        <dbReference type="EC" id="4.2.1.9"/>
    </reaction>
    <physiologicalReaction direction="left-to-right" evidence="1">
        <dbReference type="Rhea" id="RHEA:27695"/>
    </physiologicalReaction>
</comment>
<comment type="cofactor">
    <cofactor evidence="1">
        <name>[2Fe-2S] cluster</name>
        <dbReference type="ChEBI" id="CHEBI:190135"/>
    </cofactor>
    <text evidence="1">Binds 1 [2Fe-2S] cluster per subunit. This cluster acts as a Lewis acid cofactor.</text>
</comment>
<comment type="cofactor">
    <cofactor evidence="1">
        <name>Mg(2+)</name>
        <dbReference type="ChEBI" id="CHEBI:18420"/>
    </cofactor>
</comment>
<comment type="pathway">
    <text evidence="1">Amino-acid biosynthesis; L-isoleucine biosynthesis; L-isoleucine from 2-oxobutanoate: step 3/4.</text>
</comment>
<comment type="pathway">
    <text evidence="1">Amino-acid biosynthesis; L-valine biosynthesis; L-valine from pyruvate: step 3/4.</text>
</comment>
<comment type="subunit">
    <text evidence="1">Homodimer.</text>
</comment>
<comment type="similarity">
    <text evidence="1">Belongs to the IlvD/Edd family.</text>
</comment>
<evidence type="ECO:0000255" key="1">
    <source>
        <dbReference type="HAMAP-Rule" id="MF_00012"/>
    </source>
</evidence>
<dbReference type="EC" id="4.2.1.9" evidence="1"/>
<dbReference type="EMBL" id="CP000947">
    <property type="protein sequence ID" value="ACA31836.1"/>
    <property type="molecule type" value="Genomic_DNA"/>
</dbReference>
<dbReference type="RefSeq" id="WP_012341084.1">
    <property type="nucleotide sequence ID" value="NC_010519.1"/>
</dbReference>
<dbReference type="SMR" id="B0UW18"/>
<dbReference type="STRING" id="228400.HSM_0213"/>
<dbReference type="GeneID" id="31486492"/>
<dbReference type="KEGG" id="hsm:HSM_0213"/>
<dbReference type="HOGENOM" id="CLU_014271_4_2_6"/>
<dbReference type="UniPathway" id="UPA00047">
    <property type="reaction ID" value="UER00057"/>
</dbReference>
<dbReference type="UniPathway" id="UPA00049">
    <property type="reaction ID" value="UER00061"/>
</dbReference>
<dbReference type="GO" id="GO:0005829">
    <property type="term" value="C:cytosol"/>
    <property type="evidence" value="ECO:0007669"/>
    <property type="project" value="TreeGrafter"/>
</dbReference>
<dbReference type="GO" id="GO:0051537">
    <property type="term" value="F:2 iron, 2 sulfur cluster binding"/>
    <property type="evidence" value="ECO:0007669"/>
    <property type="project" value="UniProtKB-UniRule"/>
</dbReference>
<dbReference type="GO" id="GO:0004160">
    <property type="term" value="F:dihydroxy-acid dehydratase activity"/>
    <property type="evidence" value="ECO:0007669"/>
    <property type="project" value="UniProtKB-UniRule"/>
</dbReference>
<dbReference type="GO" id="GO:0000287">
    <property type="term" value="F:magnesium ion binding"/>
    <property type="evidence" value="ECO:0007669"/>
    <property type="project" value="UniProtKB-UniRule"/>
</dbReference>
<dbReference type="GO" id="GO:0009097">
    <property type="term" value="P:isoleucine biosynthetic process"/>
    <property type="evidence" value="ECO:0007669"/>
    <property type="project" value="UniProtKB-UniRule"/>
</dbReference>
<dbReference type="GO" id="GO:0009099">
    <property type="term" value="P:L-valine biosynthetic process"/>
    <property type="evidence" value="ECO:0007669"/>
    <property type="project" value="UniProtKB-UniRule"/>
</dbReference>
<dbReference type="FunFam" id="3.50.30.80:FF:000001">
    <property type="entry name" value="Dihydroxy-acid dehydratase"/>
    <property type="match status" value="1"/>
</dbReference>
<dbReference type="Gene3D" id="3.50.30.80">
    <property type="entry name" value="IlvD/EDD C-terminal domain-like"/>
    <property type="match status" value="1"/>
</dbReference>
<dbReference type="HAMAP" id="MF_00012">
    <property type="entry name" value="IlvD"/>
    <property type="match status" value="1"/>
</dbReference>
<dbReference type="InterPro" id="IPR042096">
    <property type="entry name" value="Dihydro-acid_dehy_C"/>
</dbReference>
<dbReference type="InterPro" id="IPR004404">
    <property type="entry name" value="DihydroxyA_deHydtase"/>
</dbReference>
<dbReference type="InterPro" id="IPR020558">
    <property type="entry name" value="DiOHA_6PGluconate_deHydtase_CS"/>
</dbReference>
<dbReference type="InterPro" id="IPR056740">
    <property type="entry name" value="ILV_EDD_C"/>
</dbReference>
<dbReference type="InterPro" id="IPR000581">
    <property type="entry name" value="ILV_EDD_N"/>
</dbReference>
<dbReference type="InterPro" id="IPR037237">
    <property type="entry name" value="IlvD/EDD_N"/>
</dbReference>
<dbReference type="NCBIfam" id="TIGR00110">
    <property type="entry name" value="ilvD"/>
    <property type="match status" value="1"/>
</dbReference>
<dbReference type="NCBIfam" id="NF009103">
    <property type="entry name" value="PRK12448.1"/>
    <property type="match status" value="1"/>
</dbReference>
<dbReference type="PANTHER" id="PTHR43661">
    <property type="entry name" value="D-XYLONATE DEHYDRATASE"/>
    <property type="match status" value="1"/>
</dbReference>
<dbReference type="PANTHER" id="PTHR43661:SF3">
    <property type="entry name" value="D-XYLONATE DEHYDRATASE YAGF-RELATED"/>
    <property type="match status" value="1"/>
</dbReference>
<dbReference type="Pfam" id="PF24877">
    <property type="entry name" value="ILV_EDD_C"/>
    <property type="match status" value="1"/>
</dbReference>
<dbReference type="Pfam" id="PF00920">
    <property type="entry name" value="ILVD_EDD_N"/>
    <property type="match status" value="1"/>
</dbReference>
<dbReference type="SUPFAM" id="SSF143975">
    <property type="entry name" value="IlvD/EDD N-terminal domain-like"/>
    <property type="match status" value="1"/>
</dbReference>
<dbReference type="SUPFAM" id="SSF52016">
    <property type="entry name" value="LeuD/IlvD-like"/>
    <property type="match status" value="1"/>
</dbReference>
<dbReference type="PROSITE" id="PS00886">
    <property type="entry name" value="ILVD_EDD_1"/>
    <property type="match status" value="1"/>
</dbReference>
<dbReference type="PROSITE" id="PS00887">
    <property type="entry name" value="ILVD_EDD_2"/>
    <property type="match status" value="1"/>
</dbReference>
<keyword id="KW-0001">2Fe-2S</keyword>
<keyword id="KW-0028">Amino-acid biosynthesis</keyword>
<keyword id="KW-0100">Branched-chain amino acid biosynthesis</keyword>
<keyword id="KW-0408">Iron</keyword>
<keyword id="KW-0411">Iron-sulfur</keyword>
<keyword id="KW-0456">Lyase</keyword>
<keyword id="KW-0460">Magnesium</keyword>
<keyword id="KW-0479">Metal-binding</keyword>
<reference key="1">
    <citation type="submission" date="2008-02" db="EMBL/GenBank/DDBJ databases">
        <title>Complete sequence of Haemophilus somnus 2336.</title>
        <authorList>
            <consortium name="US DOE Joint Genome Institute"/>
            <person name="Siddaramappa S."/>
            <person name="Duncan A.J."/>
            <person name="Challacombe J.F."/>
            <person name="Rainey D."/>
            <person name="Gillaspy A.F."/>
            <person name="Carson M."/>
            <person name="Gipson J."/>
            <person name="Gipson M."/>
            <person name="Bruce D."/>
            <person name="Detter J.C."/>
            <person name="Han C.S."/>
            <person name="Land M."/>
            <person name="Tapia R."/>
            <person name="Thompson L.S."/>
            <person name="Orvis J."/>
            <person name="Zaitshik J."/>
            <person name="Barnes G."/>
            <person name="Brettin T.S."/>
            <person name="Dyer D.W."/>
            <person name="Inzana T.J."/>
        </authorList>
    </citation>
    <scope>NUCLEOTIDE SEQUENCE [LARGE SCALE GENOMIC DNA]</scope>
    <source>
        <strain>2336</strain>
    </source>
</reference>
<accession>B0UW18</accession>
<name>ILVD_HISS2</name>